<name>TBA_DICPU</name>
<comment type="function">
    <text>Tubulin is the major constituent of microtubules, a cylinder consisting of laterally associated linear protofilaments composed of alpha- and beta-tubulin heterodimers. Microtubules grow by the addition of GTP-tubulin dimers to the microtubule end, where a stabilizing cap forms. Below the cap, tubulin dimers are in GDP-bound state, owing to GTPase activity of alpha-tubulin.</text>
</comment>
<comment type="catalytic activity">
    <reaction evidence="2">
        <text>GTP + H2O = GDP + phosphate + H(+)</text>
        <dbReference type="Rhea" id="RHEA:19669"/>
        <dbReference type="ChEBI" id="CHEBI:15377"/>
        <dbReference type="ChEBI" id="CHEBI:15378"/>
        <dbReference type="ChEBI" id="CHEBI:37565"/>
        <dbReference type="ChEBI" id="CHEBI:43474"/>
        <dbReference type="ChEBI" id="CHEBI:58189"/>
    </reaction>
    <physiologicalReaction direction="left-to-right" evidence="2">
        <dbReference type="Rhea" id="RHEA:19670"/>
    </physiologicalReaction>
</comment>
<comment type="cofactor">
    <cofactor evidence="2">
        <name>Mg(2+)</name>
        <dbReference type="ChEBI" id="CHEBI:18420"/>
    </cofactor>
</comment>
<comment type="subunit">
    <text>Dimer of alpha and beta chains. A typical microtubule is a hollow water-filled tube with an outer diameter of 25 nm and an inner diameter of 15 nM. Alpha-beta heterodimers associate head-to-tail to form protofilaments running lengthwise along the microtubule wall with the beta-tubulin subunit facing the microtubule plus end conferring a structural polarity. Microtubules usually have 13 protofilaments but different protofilament numbers can be found in some organisms and specialized cells.</text>
</comment>
<comment type="subcellular location">
    <subcellularLocation>
        <location evidence="1">Cytoplasm</location>
        <location evidence="1">Cytoskeleton</location>
    </subcellularLocation>
</comment>
<comment type="PTM">
    <text evidence="1">Undergoes a tyrosination/detyrosination cycle, the cyclic removal and re-addition of a C-terminal tyrosine residue by the enzymes tubulin tyrosine carboxypeptidase (TTCP) and tubulin tyrosine ligase (TTL), respectively.</text>
</comment>
<comment type="similarity">
    <text evidence="3">Belongs to the tubulin family.</text>
</comment>
<accession>A0AAL4</accession>
<protein>
    <recommendedName>
        <fullName>Tubulin alpha chain</fullName>
        <ecNumber evidence="2">3.6.5.-</ecNumber>
    </recommendedName>
    <alternativeName>
        <fullName>Alpha-tubulin</fullName>
    </alternativeName>
</protein>
<organism>
    <name type="scientific">Dictyostelium purpureum</name>
    <name type="common">Slime mold</name>
    <dbReference type="NCBI Taxonomy" id="5786"/>
    <lineage>
        <taxon>Eukaryota</taxon>
        <taxon>Amoebozoa</taxon>
        <taxon>Evosea</taxon>
        <taxon>Eumycetozoa</taxon>
        <taxon>Dictyostelia</taxon>
        <taxon>Dictyosteliales</taxon>
        <taxon>Dictyosteliaceae</taxon>
        <taxon>Dictyostelium</taxon>
    </lineage>
</organism>
<keyword id="KW-0963">Cytoplasm</keyword>
<keyword id="KW-0206">Cytoskeleton</keyword>
<keyword id="KW-0342">GTP-binding</keyword>
<keyword id="KW-0378">Hydrolase</keyword>
<keyword id="KW-0493">Microtubule</keyword>
<keyword id="KW-0547">Nucleotide-binding</keyword>
<feature type="chain" id="PRO_0000312172" description="Tubulin alpha chain">
    <location>
        <begin position="1" status="less than"/>
        <end position="333" status="greater than"/>
    </location>
</feature>
<feature type="binding site" evidence="2">
    <location>
        <position position="48"/>
    </location>
    <ligand>
        <name>GTP</name>
        <dbReference type="ChEBI" id="CHEBI:37565"/>
    </ligand>
</feature>
<feature type="binding site" evidence="2">
    <location>
        <position position="52"/>
    </location>
    <ligand>
        <name>GTP</name>
        <dbReference type="ChEBI" id="CHEBI:37565"/>
    </ligand>
</feature>
<feature type="binding site" evidence="2">
    <location>
        <position position="53"/>
    </location>
    <ligand>
        <name>GTP</name>
        <dbReference type="ChEBI" id="CHEBI:37565"/>
    </ligand>
</feature>
<feature type="binding site" evidence="2">
    <location>
        <position position="88"/>
    </location>
    <ligand>
        <name>GTP</name>
        <dbReference type="ChEBI" id="CHEBI:37565"/>
    </ligand>
</feature>
<feature type="binding site" evidence="2">
    <location>
        <position position="115"/>
    </location>
    <ligand>
        <name>GTP</name>
        <dbReference type="ChEBI" id="CHEBI:37565"/>
    </ligand>
</feature>
<feature type="binding site" evidence="2">
    <location>
        <position position="137"/>
    </location>
    <ligand>
        <name>GTP</name>
        <dbReference type="ChEBI" id="CHEBI:37565"/>
    </ligand>
</feature>
<feature type="non-terminal residue">
    <location>
        <position position="1"/>
    </location>
</feature>
<feature type="non-terminal residue">
    <location>
        <position position="333"/>
    </location>
</feature>
<gene>
    <name type="primary">tuba</name>
</gene>
<reference key="1">
    <citation type="journal article" date="2006" name="Science">
        <title>Molecular phylogeny and evolution of morphology in the social amoebas.</title>
        <authorList>
            <person name="Schaap P."/>
            <person name="Winckler T."/>
            <person name="Nelson M."/>
            <person name="Alvarez-Curto E."/>
            <person name="Elgie B."/>
            <person name="Hagiwara H."/>
            <person name="Cavender J."/>
            <person name="Milano-Curto A."/>
            <person name="Rozen D.E."/>
            <person name="Dingermann T."/>
            <person name="Mutzel R."/>
            <person name="Baldauf S.L."/>
        </authorList>
    </citation>
    <scope>NUCLEOTIDE SEQUENCE [GENOMIC DNA]</scope>
    <source>
        <strain>WS321</strain>
    </source>
</reference>
<proteinExistence type="inferred from homology"/>
<dbReference type="EC" id="3.6.5.-" evidence="2"/>
<dbReference type="EMBL" id="AM168456">
    <property type="protein sequence ID" value="CAJ44838.1"/>
    <property type="molecule type" value="Genomic_DNA"/>
</dbReference>
<dbReference type="SMR" id="A0AAL4"/>
<dbReference type="VEuPathDB" id="AmoebaDB:DICPUDRAFT_50524"/>
<dbReference type="eggNOG" id="KOG1376">
    <property type="taxonomic scope" value="Eukaryota"/>
</dbReference>
<dbReference type="GO" id="GO:0005737">
    <property type="term" value="C:cytoplasm"/>
    <property type="evidence" value="ECO:0007669"/>
    <property type="project" value="UniProtKB-KW"/>
</dbReference>
<dbReference type="GO" id="GO:0005874">
    <property type="term" value="C:microtubule"/>
    <property type="evidence" value="ECO:0007669"/>
    <property type="project" value="UniProtKB-KW"/>
</dbReference>
<dbReference type="GO" id="GO:0005525">
    <property type="term" value="F:GTP binding"/>
    <property type="evidence" value="ECO:0007669"/>
    <property type="project" value="UniProtKB-KW"/>
</dbReference>
<dbReference type="GO" id="GO:0016787">
    <property type="term" value="F:hydrolase activity"/>
    <property type="evidence" value="ECO:0007669"/>
    <property type="project" value="UniProtKB-KW"/>
</dbReference>
<dbReference type="GO" id="GO:0005200">
    <property type="term" value="F:structural constituent of cytoskeleton"/>
    <property type="evidence" value="ECO:0007669"/>
    <property type="project" value="InterPro"/>
</dbReference>
<dbReference type="GO" id="GO:0007017">
    <property type="term" value="P:microtubule-based process"/>
    <property type="evidence" value="ECO:0007669"/>
    <property type="project" value="InterPro"/>
</dbReference>
<dbReference type="CDD" id="cd02186">
    <property type="entry name" value="alpha_tubulin"/>
    <property type="match status" value="1"/>
</dbReference>
<dbReference type="FunFam" id="3.30.1330.20:FF:000032">
    <property type="entry name" value="Tubulin alpha chain"/>
    <property type="match status" value="1"/>
</dbReference>
<dbReference type="FunFam" id="3.40.50.1440:FF:000040">
    <property type="entry name" value="Tubulin alpha chain"/>
    <property type="match status" value="1"/>
</dbReference>
<dbReference type="Gene3D" id="1.10.287.600">
    <property type="entry name" value="Helix hairpin bin"/>
    <property type="match status" value="1"/>
</dbReference>
<dbReference type="Gene3D" id="3.30.1330.20">
    <property type="entry name" value="Tubulin/FtsZ, C-terminal domain"/>
    <property type="match status" value="1"/>
</dbReference>
<dbReference type="Gene3D" id="3.40.50.1440">
    <property type="entry name" value="Tubulin/FtsZ, GTPase domain"/>
    <property type="match status" value="1"/>
</dbReference>
<dbReference type="InterPro" id="IPR002452">
    <property type="entry name" value="Alpha_tubulin"/>
</dbReference>
<dbReference type="InterPro" id="IPR008280">
    <property type="entry name" value="Tub_FtsZ_C"/>
</dbReference>
<dbReference type="InterPro" id="IPR000217">
    <property type="entry name" value="Tubulin"/>
</dbReference>
<dbReference type="InterPro" id="IPR037103">
    <property type="entry name" value="Tubulin/FtsZ-like_C"/>
</dbReference>
<dbReference type="InterPro" id="IPR018316">
    <property type="entry name" value="Tubulin/FtsZ_2-layer-sand-dom"/>
</dbReference>
<dbReference type="InterPro" id="IPR036525">
    <property type="entry name" value="Tubulin/FtsZ_GTPase_sf"/>
</dbReference>
<dbReference type="InterPro" id="IPR023123">
    <property type="entry name" value="Tubulin_C"/>
</dbReference>
<dbReference type="InterPro" id="IPR017975">
    <property type="entry name" value="Tubulin_CS"/>
</dbReference>
<dbReference type="InterPro" id="IPR003008">
    <property type="entry name" value="Tubulin_FtsZ_GTPase"/>
</dbReference>
<dbReference type="PANTHER" id="PTHR11588">
    <property type="entry name" value="TUBULIN"/>
    <property type="match status" value="1"/>
</dbReference>
<dbReference type="Pfam" id="PF00091">
    <property type="entry name" value="Tubulin"/>
    <property type="match status" value="1"/>
</dbReference>
<dbReference type="Pfam" id="PF03953">
    <property type="entry name" value="Tubulin_C"/>
    <property type="match status" value="1"/>
</dbReference>
<dbReference type="PRINTS" id="PR01162">
    <property type="entry name" value="ALPHATUBULIN"/>
</dbReference>
<dbReference type="PRINTS" id="PR01161">
    <property type="entry name" value="TUBULIN"/>
</dbReference>
<dbReference type="SMART" id="SM00864">
    <property type="entry name" value="Tubulin"/>
    <property type="match status" value="1"/>
</dbReference>
<dbReference type="SMART" id="SM00865">
    <property type="entry name" value="Tubulin_C"/>
    <property type="match status" value="1"/>
</dbReference>
<dbReference type="SUPFAM" id="SSF55307">
    <property type="entry name" value="Tubulin C-terminal domain-like"/>
    <property type="match status" value="1"/>
</dbReference>
<dbReference type="SUPFAM" id="SSF52490">
    <property type="entry name" value="Tubulin nucleotide-binding domain-like"/>
    <property type="match status" value="1"/>
</dbReference>
<dbReference type="PROSITE" id="PS00227">
    <property type="entry name" value="TUBULIN"/>
    <property type="match status" value="1"/>
</dbReference>
<sequence length="333" mass="37009">LRGKEDAANNYARGHYTVGKELIEVCADRIRKLADQCEGLQGFLVFHSVGGGTGSGFGSLLLQRLALEYGGKKSKLDFCVYPSPQVSTSVVEPYNSVLSTHSLLEHTDVSFMLDNEAIYNICKKSLDIEKPTYTNLNRLIAQVISSLTSSLRFPGPLNLDINDIQTNLVPFPRLHFVLCSYAPVISKEKSEHENITVDAITNSVFSENNIMAKCQPHLGKYMACCLMYRGNIVPKEAQKAVQNIRNEKSKTVSFVDWSPTGFKCGINNSKPTTVLGENGDNMARTEKSVCMLSNTTAISQVFSRINHKFDLMYIKRAFVHWYVGEGMEEGEGL</sequence>
<evidence type="ECO:0000250" key="1"/>
<evidence type="ECO:0000250" key="2">
    <source>
        <dbReference type="UniProtKB" id="P68363"/>
    </source>
</evidence>
<evidence type="ECO:0000305" key="3"/>